<reference key="1">
    <citation type="journal article" date="2015" name="Proc. Natl. Acad. Sci. U.S.A.">
        <title>Trichodesmium genome maintains abundant, widespread noncoding DNA in situ, despite oligotrophic lifestyle.</title>
        <authorList>
            <person name="Walworth N."/>
            <person name="Pfreundt U."/>
            <person name="Nelson W.C."/>
            <person name="Mincer T."/>
            <person name="Heidelberg J.F."/>
            <person name="Fu F."/>
            <person name="Waterbury J.B."/>
            <person name="Glavina del Rio T."/>
            <person name="Goodwin L."/>
            <person name="Kyrpides N.C."/>
            <person name="Land M.L."/>
            <person name="Woyke T."/>
            <person name="Hutchins D.A."/>
            <person name="Hess W.R."/>
            <person name="Webb E.A."/>
        </authorList>
    </citation>
    <scope>NUCLEOTIDE SEQUENCE [LARGE SCALE GENOMIC DNA]</scope>
    <source>
        <strain>IMS101</strain>
    </source>
</reference>
<keyword id="KW-0687">Ribonucleoprotein</keyword>
<keyword id="KW-0689">Ribosomal protein</keyword>
<keyword id="KW-0694">RNA-binding</keyword>
<keyword id="KW-0699">rRNA-binding</keyword>
<evidence type="ECO:0000255" key="1">
    <source>
        <dbReference type="HAMAP-Rule" id="MF_01363"/>
    </source>
</evidence>
<evidence type="ECO:0000305" key="2"/>
<feature type="chain" id="PRO_0000269418" description="Large ribosomal subunit protein bL21">
    <location>
        <begin position="1"/>
        <end position="136"/>
    </location>
</feature>
<comment type="function">
    <text evidence="1">This protein binds to 23S rRNA in the presence of protein L20.</text>
</comment>
<comment type="subunit">
    <text evidence="1">Part of the 50S ribosomal subunit. Contacts protein L20.</text>
</comment>
<comment type="similarity">
    <text evidence="1">Belongs to the bacterial ribosomal protein bL21 family.</text>
</comment>
<gene>
    <name evidence="1" type="primary">rplU</name>
    <name evidence="1" type="synonym">rpl21</name>
    <name type="ordered locus">Tery_3243</name>
</gene>
<name>RL21_TRIEI</name>
<protein>
    <recommendedName>
        <fullName evidence="1">Large ribosomal subunit protein bL21</fullName>
    </recommendedName>
    <alternativeName>
        <fullName evidence="2">50S ribosomal protein L21</fullName>
    </alternativeName>
</protein>
<dbReference type="EMBL" id="CP000393">
    <property type="protein sequence ID" value="ABG52358.1"/>
    <property type="molecule type" value="Genomic_DNA"/>
</dbReference>
<dbReference type="RefSeq" id="WP_011612703.1">
    <property type="nucleotide sequence ID" value="NC_008312.1"/>
</dbReference>
<dbReference type="SMR" id="Q10ZG6"/>
<dbReference type="STRING" id="203124.Tery_3243"/>
<dbReference type="KEGG" id="ter:Tery_3243"/>
<dbReference type="eggNOG" id="COG0261">
    <property type="taxonomic scope" value="Bacteria"/>
</dbReference>
<dbReference type="HOGENOM" id="CLU_061463_1_2_3"/>
<dbReference type="OrthoDB" id="9813334at2"/>
<dbReference type="GO" id="GO:0005737">
    <property type="term" value="C:cytoplasm"/>
    <property type="evidence" value="ECO:0007669"/>
    <property type="project" value="UniProtKB-ARBA"/>
</dbReference>
<dbReference type="GO" id="GO:1990904">
    <property type="term" value="C:ribonucleoprotein complex"/>
    <property type="evidence" value="ECO:0007669"/>
    <property type="project" value="UniProtKB-KW"/>
</dbReference>
<dbReference type="GO" id="GO:0005840">
    <property type="term" value="C:ribosome"/>
    <property type="evidence" value="ECO:0007669"/>
    <property type="project" value="UniProtKB-KW"/>
</dbReference>
<dbReference type="GO" id="GO:0019843">
    <property type="term" value="F:rRNA binding"/>
    <property type="evidence" value="ECO:0007669"/>
    <property type="project" value="UniProtKB-UniRule"/>
</dbReference>
<dbReference type="GO" id="GO:0003735">
    <property type="term" value="F:structural constituent of ribosome"/>
    <property type="evidence" value="ECO:0007669"/>
    <property type="project" value="InterPro"/>
</dbReference>
<dbReference type="GO" id="GO:0006412">
    <property type="term" value="P:translation"/>
    <property type="evidence" value="ECO:0007669"/>
    <property type="project" value="UniProtKB-UniRule"/>
</dbReference>
<dbReference type="HAMAP" id="MF_01363">
    <property type="entry name" value="Ribosomal_bL21"/>
    <property type="match status" value="1"/>
</dbReference>
<dbReference type="InterPro" id="IPR028909">
    <property type="entry name" value="bL21-like"/>
</dbReference>
<dbReference type="InterPro" id="IPR036164">
    <property type="entry name" value="bL21-like_sf"/>
</dbReference>
<dbReference type="InterPro" id="IPR001787">
    <property type="entry name" value="Ribosomal_bL21"/>
</dbReference>
<dbReference type="InterPro" id="IPR018258">
    <property type="entry name" value="Ribosomal_bL21_CS"/>
</dbReference>
<dbReference type="NCBIfam" id="TIGR00061">
    <property type="entry name" value="L21"/>
    <property type="match status" value="1"/>
</dbReference>
<dbReference type="PANTHER" id="PTHR21349">
    <property type="entry name" value="50S RIBOSOMAL PROTEIN L21"/>
    <property type="match status" value="1"/>
</dbReference>
<dbReference type="PANTHER" id="PTHR21349:SF0">
    <property type="entry name" value="LARGE RIBOSOMAL SUBUNIT PROTEIN BL21M"/>
    <property type="match status" value="1"/>
</dbReference>
<dbReference type="Pfam" id="PF00829">
    <property type="entry name" value="Ribosomal_L21p"/>
    <property type="match status" value="1"/>
</dbReference>
<dbReference type="SUPFAM" id="SSF141091">
    <property type="entry name" value="L21p-like"/>
    <property type="match status" value="1"/>
</dbReference>
<dbReference type="PROSITE" id="PS01169">
    <property type="entry name" value="RIBOSOMAL_L21"/>
    <property type="match status" value="1"/>
</dbReference>
<accession>Q10ZG6</accession>
<proteinExistence type="inferred from homology"/>
<sequence length="136" mass="15178">MTYAIIETGGKQLRVEAGRFYDIDLLSGSEGDRISINNVLLVQNDGDVHIGQPLVEGALIEGTIMKHLRGKKIIVYKMRPKKKTRKKRGHRQELTRLMIDSISLNGKVLASLEKSLVEKPESSVMEVTSETTETVT</sequence>
<organism>
    <name type="scientific">Trichodesmium erythraeum (strain IMS101)</name>
    <dbReference type="NCBI Taxonomy" id="203124"/>
    <lineage>
        <taxon>Bacteria</taxon>
        <taxon>Bacillati</taxon>
        <taxon>Cyanobacteriota</taxon>
        <taxon>Cyanophyceae</taxon>
        <taxon>Oscillatoriophycideae</taxon>
        <taxon>Oscillatoriales</taxon>
        <taxon>Microcoleaceae</taxon>
        <taxon>Trichodesmium</taxon>
    </lineage>
</organism>